<sequence>MTTSTAAKRTKSGCWTCRLRRKKCNEGGPPCDNCEARGIHCHGYGPRPQWKDRGALEREEARKLQYQSGRGRSYSRSSSTAAAAAPKPAEGAMVTGGSSSSSRGSGSSIYVGGNGLGGAQEEQHGDNNAPFSAGTGNFEYQANPAPGISPLMSDIDLALDAHAMDPLDFNFDFSSTPSSAVDKSSSTSADSPSFTSIECSQFPIFSPELTVDTPVALFPQVAPIPPGLPGRESVPVAACTDLVISHGLLLEEMDRPVGQRHGQVMAEGEKGIELMMRCPPAPRAPRLEGQGRSAHILLFVRDWYAASSWRIWSGNIQDCQNHIDAAASLLLEHETALVGEAHRLSNMERKALAFFTVRLIWNDVLLSSTRRTVPKAEMVYRRLLLADSNSRGGDSHTTTSTTGPTTTTPLLAASTFWDLTGCEGAVLLAMLDASILSAWRLGEEASGSLSIRALVGRADKIEAVVEGEIARLSSLLPRSPEKTSSASGKPSHGRKTGPENEVTVATVHSLIFAHAILTDLHQTVSGPRASVPEIGDSISRAISSAWNLWQEQQQQGAGLGLERILAWPYCVAASLAKGDQREVFREIIARTENGDGSSSGGDVQQLKSIVEQCWATSSSNHRDWKDVVQRSNQFGVFLI</sequence>
<keyword id="KW-0238">DNA-binding</keyword>
<keyword id="KW-0479">Metal-binding</keyword>
<keyword id="KW-0539">Nucleus</keyword>
<keyword id="KW-0804">Transcription</keyword>
<keyword id="KW-0805">Transcription regulation</keyword>
<keyword id="KW-0843">Virulence</keyword>
<keyword id="KW-0862">Zinc</keyword>
<reference key="1">
    <citation type="journal article" date="2021" name="Angew. Chem. Int. Ed.">
        <title>Biosynthetic studies of phomopsins unveil posttranslational installation of dehydroamino acids by ustYa family proteins.</title>
        <authorList>
            <person name="Sogahata K."/>
            <person name="Ozaki T."/>
            <person name="Igarashi Y."/>
            <person name="Naganuma Y."/>
            <person name="Liu C."/>
            <person name="Minami A."/>
            <person name="Oikawa H."/>
        </authorList>
    </citation>
    <scope>NUCLEOTIDE SEQUENCE [GENOMIC DNA]</scope>
    <scope>FUNCTION</scope>
    <source>
        <strain>ATCC 26115 / IMI 115107 / C 1557</strain>
    </source>
</reference>
<accession>A0A8J9RZ21</accession>
<dbReference type="EMBL" id="LC646903">
    <property type="protein sequence ID" value="BDA39143.1"/>
    <property type="molecule type" value="Genomic_DNA"/>
</dbReference>
<dbReference type="GO" id="GO:0005634">
    <property type="term" value="C:nucleus"/>
    <property type="evidence" value="ECO:0007669"/>
    <property type="project" value="UniProtKB-SubCell"/>
</dbReference>
<dbReference type="GO" id="GO:0003677">
    <property type="term" value="F:DNA binding"/>
    <property type="evidence" value="ECO:0007669"/>
    <property type="project" value="UniProtKB-KW"/>
</dbReference>
<dbReference type="GO" id="GO:0000981">
    <property type="term" value="F:DNA-binding transcription factor activity, RNA polymerase II-specific"/>
    <property type="evidence" value="ECO:0007669"/>
    <property type="project" value="InterPro"/>
</dbReference>
<dbReference type="GO" id="GO:0008270">
    <property type="term" value="F:zinc ion binding"/>
    <property type="evidence" value="ECO:0007669"/>
    <property type="project" value="InterPro"/>
</dbReference>
<dbReference type="CDD" id="cd00067">
    <property type="entry name" value="GAL4"/>
    <property type="match status" value="1"/>
</dbReference>
<dbReference type="Gene3D" id="4.10.240.10">
    <property type="entry name" value="Zn(2)-C6 fungal-type DNA-binding domain"/>
    <property type="match status" value="1"/>
</dbReference>
<dbReference type="InterPro" id="IPR021858">
    <property type="entry name" value="Fun_TF"/>
</dbReference>
<dbReference type="InterPro" id="IPR036864">
    <property type="entry name" value="Zn2-C6_fun-type_DNA-bd_sf"/>
</dbReference>
<dbReference type="InterPro" id="IPR001138">
    <property type="entry name" value="Zn2Cys6_DnaBD"/>
</dbReference>
<dbReference type="PANTHER" id="PTHR37534:SF20">
    <property type="entry name" value="PRO1A C6 ZINK-FINGER PROTEIN"/>
    <property type="match status" value="1"/>
</dbReference>
<dbReference type="PANTHER" id="PTHR37534">
    <property type="entry name" value="TRANSCRIPTIONAL ACTIVATOR PROTEIN UGA3"/>
    <property type="match status" value="1"/>
</dbReference>
<dbReference type="Pfam" id="PF11951">
    <property type="entry name" value="Fungal_trans_2"/>
    <property type="match status" value="1"/>
</dbReference>
<dbReference type="Pfam" id="PF00172">
    <property type="entry name" value="Zn_clus"/>
    <property type="match status" value="1"/>
</dbReference>
<dbReference type="SMART" id="SM00066">
    <property type="entry name" value="GAL4"/>
    <property type="match status" value="1"/>
</dbReference>
<dbReference type="SUPFAM" id="SSF57701">
    <property type="entry name" value="Zn2/Cys6 DNA-binding domain"/>
    <property type="match status" value="1"/>
</dbReference>
<dbReference type="PROSITE" id="PS00463">
    <property type="entry name" value="ZN2_CY6_FUNGAL_1"/>
    <property type="match status" value="1"/>
</dbReference>
<dbReference type="PROSITE" id="PS50048">
    <property type="entry name" value="ZN2_CY6_FUNGAL_2"/>
    <property type="match status" value="1"/>
</dbReference>
<proteinExistence type="inferred from homology"/>
<gene>
    <name evidence="4" type="primary">phomR</name>
</gene>
<organism>
    <name type="scientific">Diaporthe leptostromiformis</name>
    <name type="common">Lupinosis disease fungus</name>
    <name type="synonym">Phomopsis leptostromiformis</name>
    <dbReference type="NCBI Taxonomy" id="291059"/>
    <lineage>
        <taxon>Eukaryota</taxon>
        <taxon>Fungi</taxon>
        <taxon>Dikarya</taxon>
        <taxon>Ascomycota</taxon>
        <taxon>Pezizomycotina</taxon>
        <taxon>Sordariomycetes</taxon>
        <taxon>Sordariomycetidae</taxon>
        <taxon>Diaporthales</taxon>
        <taxon>Diaporthaceae</taxon>
        <taxon>Diaporthe</taxon>
    </lineage>
</organism>
<name>PHOR1_DIALO</name>
<comment type="function">
    <text evidence="3 5">Transcription factor; part of the gene cluster that mediates the biosynthesis of the phomopsins, a group of hexapeptide mycotoxins which infects lupins and causes lupinosis disease in livestock (PubMed:34608734). May play a role in the regulation of the production of phomopsins (Probable).</text>
</comment>
<comment type="subcellular location">
    <subcellularLocation>
        <location evidence="1">Nucleus</location>
    </subcellularLocation>
</comment>
<protein>
    <recommendedName>
        <fullName evidence="4">Transcription factor phomR</fullName>
    </recommendedName>
    <alternativeName>
        <fullName evidence="4">Phomopsin biosynthesis cluster protein R</fullName>
    </alternativeName>
</protein>
<evidence type="ECO:0000255" key="1">
    <source>
        <dbReference type="PROSITE-ProRule" id="PRU00227"/>
    </source>
</evidence>
<evidence type="ECO:0000256" key="2">
    <source>
        <dbReference type="SAM" id="MobiDB-lite"/>
    </source>
</evidence>
<evidence type="ECO:0000269" key="3">
    <source>
    </source>
</evidence>
<evidence type="ECO:0000303" key="4">
    <source>
    </source>
</evidence>
<evidence type="ECO:0000305" key="5">
    <source>
    </source>
</evidence>
<feature type="chain" id="PRO_0000458398" description="Transcription factor phomR">
    <location>
        <begin position="1"/>
        <end position="639"/>
    </location>
</feature>
<feature type="DNA-binding region" description="Zn(2)-C6 fungal-type" evidence="1">
    <location>
        <begin position="14"/>
        <end position="41"/>
    </location>
</feature>
<feature type="region of interest" description="Disordered" evidence="2">
    <location>
        <begin position="58"/>
        <end position="136"/>
    </location>
</feature>
<feature type="region of interest" description="Disordered" evidence="2">
    <location>
        <begin position="476"/>
        <end position="499"/>
    </location>
</feature>
<feature type="compositionally biased region" description="Low complexity" evidence="2">
    <location>
        <begin position="68"/>
        <end position="108"/>
    </location>
</feature>